<keyword id="KW-0027">Amidation</keyword>
<keyword id="KW-0044">Antibiotic</keyword>
<keyword id="KW-0929">Antimicrobial</keyword>
<keyword id="KW-0165">Cleavage on pair of basic residues</keyword>
<keyword id="KW-0204">Cytolysis</keyword>
<keyword id="KW-0354">Hemolysis</keyword>
<keyword id="KW-0472">Membrane</keyword>
<keyword id="KW-0964">Secreted</keyword>
<keyword id="KW-0732">Signal</keyword>
<keyword id="KW-1052">Target cell membrane</keyword>
<keyword id="KW-1053">Target membrane</keyword>
<evidence type="ECO:0000250" key="1"/>
<evidence type="ECO:0000255" key="2"/>
<evidence type="ECO:0000269" key="3">
    <source>
    </source>
</evidence>
<evidence type="ECO:0000269" key="4">
    <source>
    </source>
</evidence>
<evidence type="ECO:0000269" key="5">
    <source>
    </source>
</evidence>
<evidence type="ECO:0000269" key="6">
    <source>
    </source>
</evidence>
<evidence type="ECO:0000269" key="7">
    <source>
    </source>
</evidence>
<evidence type="ECO:0000269" key="8">
    <source>
    </source>
</evidence>
<evidence type="ECO:0000303" key="9">
    <source>
    </source>
</evidence>
<evidence type="ECO:0000303" key="10">
    <source>
    </source>
</evidence>
<evidence type="ECO:0000303" key="11">
    <source>
    </source>
</evidence>
<evidence type="ECO:0000305" key="12"/>
<evidence type="ECO:0000305" key="13">
    <source>
    </source>
</evidence>
<sequence>MKTQFVILIVAVVLLQLISHSEAFLGALWNVAKSVFGKRGLRNFDDLDDTFEPEMSEADLKYLQDLLR</sequence>
<name>NDB4D_VAEMS</name>
<comment type="function">
    <text evidence="3 4 6 7 8">Cationic amphipathic peptide with antibacterial activities against both Gram-positive and Gram-negative bacteria (PubMed:22342498, PubMed:27912176, PubMed:31212183). Also shows antifungal activities (PubMed:27912176). Is mildly hemolytic against human erythrocytes (PubMed:22342498, PubMed:27912176, PubMed:31212183). In addition, when tested in vitro on the parasite Trypanosoma cruzi (responsible of the Chagas disease), is able to reduce the number of the three forms (epimastigote, trypomastigote and amastigote) (PubMed:33004083). Also shows antiplasmodial and cytotoxic activity (tested on Plasmodium gallinaceum, and MCF-7 breast cancer cell line) (PubMed:33442881).</text>
</comment>
<comment type="subcellular location">
    <subcellularLocation>
        <location evidence="1">Secreted</location>
    </subcellularLocation>
    <subcellularLocation>
        <location evidence="1">Target cell membrane</location>
    </subcellularLocation>
    <text evidence="1">Forms a helical membrane channel in the prey.</text>
</comment>
<comment type="tissue specificity">
    <text>Expressed by the venom gland.</text>
</comment>
<comment type="similarity">
    <text evidence="12">Belongs to the non-disulfide-bridged peptide (NDBP) superfamily. Short antimicrobial peptide (group 4) family.</text>
</comment>
<reference key="1">
    <citation type="journal article" date="2012" name="Peptides">
        <title>Gene cloning and functional characterization of four novel antimicrobial-like peptides from scorpions of the family Vaejovidae.</title>
        <authorList>
            <person name="Ramirez-Carreto S."/>
            <person name="Quintero-Hernandez V."/>
            <person name="Jimenez-Vargas J.M."/>
            <person name="Corzo G."/>
            <person name="Possani L.D."/>
            <person name="Becerril B."/>
            <person name="Ortiz E."/>
        </authorList>
    </citation>
    <scope>NUCLEOTIDE SEQUENCE [MRNA]</scope>
    <scope>SYNTHESIS OF 24-36</scope>
    <scope>FUNCTION</scope>
    <scope>CIRCULAR DICHROISM ANALYSIS</scope>
    <scope>PROBABLE AMIDATION AT PHE-36</scope>
    <source>
        <tissue>Venom gland</tissue>
    </source>
</reference>
<reference key="2">
    <citation type="journal article" date="2017" name="Eur. J. Med. Chem.">
        <title>Novel designed VmCT1 analogs with increased antimicrobial activity.</title>
        <authorList>
            <person name="Pedron C.N."/>
            <person name="Torres M.T."/>
            <person name="Lima J.A.D.S."/>
            <person name="Silva P.I."/>
            <person name="Silva F.D."/>
            <person name="Oliveira V.X."/>
        </authorList>
    </citation>
    <scope>FUNCTION</scope>
    <scope>MUTAGENESIS OF GLY-26; ALA-27; ASN-30; ALA-32 AND SER-34</scope>
    <scope>SYNTHESIS OF 24-36</scope>
</reference>
<reference key="3">
    <citation type="journal article" date="2019" name="Bioorg. Chem.">
        <title>Repurposing the scorpion venom peptide VmCT1 into an active peptide against Gram-negative ESKAPE pathogens.</title>
        <authorList>
            <person name="Pedron C.N."/>
            <person name="Araujo I."/>
            <person name="da Silva Junior P.I."/>
            <person name="Dias da Silva F."/>
            <person name="Torres M.T."/>
            <person name="Oliveira Junior V.X."/>
        </authorList>
    </citation>
    <scope>FUNCTION</scope>
    <scope>MUTAGENESIS OF PHE-24; GLY-26; ASN-30; VAL-31; ALA-32; SER-34 AND VAL-35</scope>
    <scope>SYNTHESIS OF 24-36</scope>
</reference>
<reference key="4">
    <citation type="journal article" date="2019" name="Eur. J. Pharm. Sci.">
        <title>The effect of lysine substitutions in the biological activities of the scorpion venom peptide VmCT1.</title>
        <authorList>
            <person name="Pedron C.N."/>
            <person name="de Oliveira C.S."/>
            <person name="da Silva A.F."/>
            <person name="Andrade G.P."/>
            <person name="da Silva Pinhal M.A."/>
            <person name="Cerchiaro G."/>
            <person name="da Silva Junior P.I."/>
            <person name="da Silva F.D."/>
            <person name="Torres M.T."/>
            <person name="Oliveira V.X."/>
        </authorList>
    </citation>
    <scope>FUNCTION</scope>
    <scope>MUTAGENESIS OF PHE-24; GLY-26; ASN-30; ALA-32; SER-34 AND VAL-35</scope>
    <scope>SYNTHESIS OF 24-36</scope>
</reference>
<reference key="5">
    <citation type="journal article" date="2020" name="Parasitology">
        <title>Arg-substituted VmCT1 analogs reveals promising candidate for the development of new antichagasic agent.</title>
        <authorList>
            <person name="Pedron C.N."/>
            <person name="Freire K.A."/>
            <person name="Torres M.T."/>
            <person name="Lima D.B."/>
            <person name="Monteiro M.L."/>
            <person name="Menezes R.R.P.P.B."/>
            <person name="Martins A.M.C."/>
            <person name="Oliveira V.X."/>
        </authorList>
    </citation>
    <scope>FUNCTION ON TRYPANOSOMA CRUZI</scope>
    <scope>MUTAGENESIS OF GLY-26; ASN-30 AND SER-34</scope>
    <scope>SYNTHESIS OF 24-36</scope>
</reference>
<reference key="6">
    <citation type="journal article" date="2021" name="J. Pept. Sci.">
        <title>Net charge tuning modulates the antiplasmodial and anticancer properties of peptides derived from scorpion venom.</title>
        <authorList>
            <person name="Pedron C.N."/>
            <person name="Silva A.F."/>
            <person name="Torres M.T."/>
            <person name="Oliveira C.S."/>
            <person name="Andrade G.P."/>
            <person name="Cerchiaro G."/>
            <person name="Pinhal M.A.S."/>
            <person name="de la Fuente-Nunez C."/>
            <person name="Oliveira Junior V.X."/>
        </authorList>
    </citation>
    <scope>FUNCTION ON PLASMODIUM AND CANCER CELLS</scope>
    <scope>MUTAGENESIS OF GLY-26; ASN-30 AND SER-34</scope>
    <scope>SYNTHESIS OF 24-36</scope>
</reference>
<reference key="7">
    <citation type="journal article" date="2013" name="Peptides">
        <title>Three new antimicrobial peptides from the scorpion Pandinus imperator.</title>
        <authorList>
            <person name="Zeng X.C."/>
            <person name="Zhou L."/>
            <person name="Shi W."/>
            <person name="Luo X."/>
            <person name="Zhang L."/>
            <person name="Nie Y."/>
            <person name="Wang J."/>
            <person name="Wu S."/>
            <person name="Cao B."/>
            <person name="Cao H."/>
        </authorList>
    </citation>
    <scope>NOMENCLATURE</scope>
</reference>
<reference key="8">
    <citation type="journal article" date="2014" name="Peptides">
        <title>Scorpion venom peptides with no disulfide bridges: a review.</title>
        <authorList>
            <person name="Almaaytah A."/>
            <person name="Albalas Q."/>
        </authorList>
    </citation>
    <scope>NOMENCLATURE</scope>
</reference>
<feature type="signal peptide" evidence="2 13">
    <location>
        <begin position="1"/>
        <end position="23"/>
    </location>
</feature>
<feature type="peptide" id="PRO_0000418781" description="Amphipathic peptide VmCT1" evidence="13">
    <location>
        <begin position="24"/>
        <end position="36"/>
    </location>
</feature>
<feature type="propeptide" id="PRO_0000418782" evidence="1">
    <location>
        <begin position="40"/>
        <end position="68"/>
    </location>
</feature>
<feature type="site" description="Important for activity" evidence="1">
    <location>
        <position position="29"/>
    </location>
</feature>
<feature type="modified residue" description="Phenylalanine amide" evidence="13">
    <location>
        <position position="36"/>
    </location>
</feature>
<feature type="mutagenesis site" description="Decrease in antibacterial activity against the antibiotic-resistant bacterium S.aureus, and no change in absence of antibacterial activity against both antibiotic-resistant bacteria E.cloacae and P.aeruginosa, as well as in decrease in hemolytic activity." evidence="6">
    <original>F</original>
    <variation>G</variation>
    <location>
        <position position="24"/>
    </location>
</feature>
<feature type="mutagenesis site" description="Decrease in antibacterial activity, increase in antifungal activity and decrease in hemolytic activity. Important decrease or loss in antibacterial, antifungal and hemolytic activities; when associated with K-35." evidence="5">
    <original>F</original>
    <variation>K</variation>
    <location>
        <position position="24"/>
    </location>
</feature>
<feature type="mutagenesis site" description="No change or increase in antibacterial and antifungal activities, and increase in hemolytic activity. Increase in antibacterial, antifungal and hemolytic activities; when associated with K-30. No change or increase in antibacterial, antifungal and hemolytic activities; when associated with K-34. Increase or no change in antibacterial activity, and increase in antifungal and hemolytic activities; when associated with K-30 and K-34." evidence="4 5">
    <original>G</original>
    <variation>K</variation>
    <location>
        <position position="26"/>
    </location>
</feature>
<feature type="mutagenesis site" description="Decrease in antibacterial activity against the antibiotic-resistant bacterium S.aureus, and important increase in absence of antibacterial activity against both antibiotic-resistant bacteria E.cloacae and P.aeruginosa, as well as in increase in hemolytic activity. Increase in trypanocidal activity. No change in antiplasmodial activity. Small decrease in cytotoxic activity." evidence="6 7 8">
    <original>G</original>
    <variation>R</variation>
    <location>
        <position position="26"/>
    </location>
</feature>
<feature type="mutagenesis site" description="Decrease in antibacterial and antifungal activities, and decrease in hemolytic activity." evidence="4">
    <original>A</original>
    <variation>E</variation>
    <location>
        <position position="27"/>
    </location>
</feature>
<feature type="mutagenesis site" description="Increase, decrease or no change in antibacterial and antifungal activities, depending on the strains tested, and increase in hemolytic activity. Decrease in antibacterial and antifungal activities, and increase in hemolytic activity; when associated with W-32." evidence="4">
    <original>N</original>
    <variation>E</variation>
    <location>
        <position position="30"/>
    </location>
</feature>
<feature type="mutagenesis site" description="Increase in antibacterial and antifungal activities on almost all strains tested, and increase in hemolytic activity. Increase in antibacterial, antifungal and hemolytic activities; when associated with K-26. Increase, decrease or no change in antibacterial activity, and increase in antifungal and hemolytic activities; when associated with K-34. Increase or no change in antibacterial activity, and increase in antifungal and hemolytic activities; when associated with K-26 and K-34." evidence="4 5">
    <original>N</original>
    <variation>K</variation>
    <location>
        <position position="30"/>
    </location>
</feature>
<feature type="mutagenesis site" description="Decrease in antibacterial activity against the antibiotic-resistant bacterium S.aureus, and important increase in antibacterial activity against both antibiotic-resistant bacteria E.cloacae and P.aeruginosa, as well as in increase in hemolytic activity. Increase in trypanocidal activity. No change in antiplasmodial activity. Small decrease in cytotoxic activity." evidence="6 7 8">
    <original>N</original>
    <variation>R</variation>
    <location>
        <position position="30"/>
    </location>
</feature>
<feature type="mutagenesis site" description="Loss in antibacterial activity against the antibiotic-resistant bacterium S.aureus, and no change in absence of antibacterial activity against both antibiotic-resistant bacteria E.cloacae and P.aeruginosa, as well as loss in hemolytic activity." evidence="6">
    <original>V</original>
    <variation>P</variation>
    <location>
        <position position="31"/>
    </location>
</feature>
<feature type="mutagenesis site" description="No change in antibacterial activity against the antibiotic-resistant bacterieum S.aureus, E.cloacae and P.aeruginosa, as well as in increase in hemolytic activity." evidence="6">
    <original>A</original>
    <variation>F</variation>
    <variation>L</variation>
    <location>
        <position position="32"/>
    </location>
</feature>
<feature type="mutagenesis site" description="Important decrease or loss in antibacterial, antifungal and hemolytic activities." evidence="5">
    <original>A</original>
    <variation>K</variation>
    <location>
        <position position="32"/>
    </location>
</feature>
<feature type="mutagenesis site" description="No change or increase in antibacterial activities, no change or decrease in antifungal activities, and increase in hemolytic activity. Decrease in antibacterial and antifungal activities, and increase in hemolytic activity; when associated with E-30." evidence="4">
    <original>A</original>
    <variation>W</variation>
    <location>
        <position position="32"/>
    </location>
</feature>
<feature type="mutagenesis site" description="Increase in antibacterial and antifungal activities on almost all strains tested, and increase in hemolytic activity. No change or increase in antibacterial, antifungal and hemolytic activities; when associated with K-26. Increase, decrease or no change in antibacterial activity, and increase in antifungal and hemolytic activities; when associated with K-30. Increase or no change in antibacterial activity, and increase in antifungal and hemolytic activities; when associated with K-26 and K-34." evidence="4 5">
    <original>S</original>
    <variation>K</variation>
    <location>
        <position position="34"/>
    </location>
</feature>
<feature type="mutagenesis site" description="Decrease in antibacterial activity against the antibiotic-resistant bacterium S.aureus, and important increase in antibacterial activity against both antibiotic-resistant bacteria E.cloacae and P.aeruginosa, as well as in increase in hemolytic activity. Increase in trypanocidal activity of trypomastigote forms, and decrease in trypanocidal activity of epimastigote forms. Loss of antiplasmodial activity. Small decrease in cytotoxic activity." evidence="6 7 8">
    <original>S</original>
    <variation>R</variation>
    <location>
        <position position="34"/>
    </location>
</feature>
<feature type="mutagenesis site" description="Important decrease or loss in antibacterial, antifungal and hemolytic activities; when associated with K-24." evidence="5">
    <original>V</original>
    <variation>K</variation>
    <location>
        <position position="35"/>
    </location>
</feature>
<feature type="mutagenesis site" description="No change in antibacterial activity against the antibiotic-resistant bacterium S.aureus, E.cloacae and P.aeruginosa, as well as in increase in hemolytic activity." evidence="6">
    <original>V</original>
    <variation>L</variation>
    <location>
        <position position="35"/>
    </location>
</feature>
<feature type="mutagenesis site" description="Decrease in antibacterial activity against the antibiotic-resistant bacterium S.aureus, and no change in absence of antibacterial activity against both antibiotic-resistant bacteria E.cloacae and P.aeruginosa, as well as no change in hemolytic activity." evidence="6">
    <original>V</original>
    <variation>Y</variation>
    <location>
        <position position="35"/>
    </location>
</feature>
<accession>I0DEB3</accession>
<protein>
    <recommendedName>
        <fullName evidence="9">Amphipathic peptide VmCT1</fullName>
        <shortName evidence="9">CT1</shortName>
    </recommendedName>
    <alternativeName>
        <fullName evidence="11">Non-disulfide-bridged peptide 4.13</fullName>
        <shortName evidence="11">NDBP-4.13</shortName>
    </alternativeName>
    <alternativeName>
        <fullName evidence="10">Non-disulfide-bridged peptide 5.13</fullName>
        <shortName evidence="10">NDBP-5.13</shortName>
    </alternativeName>
</protein>
<proteinExistence type="evidence at protein level"/>
<dbReference type="EMBL" id="JQ086325">
    <property type="protein sequence ID" value="AFH87944.1"/>
    <property type="molecule type" value="mRNA"/>
</dbReference>
<dbReference type="SMR" id="I0DEB3"/>
<dbReference type="GO" id="GO:0005576">
    <property type="term" value="C:extracellular region"/>
    <property type="evidence" value="ECO:0007669"/>
    <property type="project" value="UniProtKB-SubCell"/>
</dbReference>
<dbReference type="GO" id="GO:0016020">
    <property type="term" value="C:membrane"/>
    <property type="evidence" value="ECO:0007669"/>
    <property type="project" value="UniProtKB-KW"/>
</dbReference>
<dbReference type="GO" id="GO:0044218">
    <property type="term" value="C:other organism cell membrane"/>
    <property type="evidence" value="ECO:0007669"/>
    <property type="project" value="UniProtKB-KW"/>
</dbReference>
<dbReference type="GO" id="GO:0042742">
    <property type="term" value="P:defense response to bacterium"/>
    <property type="evidence" value="ECO:0007669"/>
    <property type="project" value="UniProtKB-KW"/>
</dbReference>
<dbReference type="GO" id="GO:0031640">
    <property type="term" value="P:killing of cells of another organism"/>
    <property type="evidence" value="ECO:0007669"/>
    <property type="project" value="UniProtKB-KW"/>
</dbReference>
<organism>
    <name type="scientific">Vaejovis mexicanus smithi</name>
    <name type="common">Mexican scorpion</name>
    <name type="synonym">Vaejovis smithi</name>
    <dbReference type="NCBI Taxonomy" id="1562928"/>
    <lineage>
        <taxon>Eukaryota</taxon>
        <taxon>Metazoa</taxon>
        <taxon>Ecdysozoa</taxon>
        <taxon>Arthropoda</taxon>
        <taxon>Chelicerata</taxon>
        <taxon>Arachnida</taxon>
        <taxon>Scorpiones</taxon>
        <taxon>Iurida</taxon>
        <taxon>Chactoidea</taxon>
        <taxon>Vaejovidae</taxon>
        <taxon>Vaejovis</taxon>
    </lineage>
</organism>